<reference key="1">
    <citation type="submission" date="2003-10" db="EMBL/GenBank/DDBJ databases">
        <title>The complete genome sequence of the alkaliphilic Bacillus clausii KSM-K16.</title>
        <authorList>
            <person name="Takaki Y."/>
            <person name="Kageyama Y."/>
            <person name="Shimamura S."/>
            <person name="Suzuki H."/>
            <person name="Nishi S."/>
            <person name="Hatada Y."/>
            <person name="Kawai S."/>
            <person name="Ito S."/>
            <person name="Horikoshi K."/>
        </authorList>
    </citation>
    <scope>NUCLEOTIDE SEQUENCE [LARGE SCALE GENOMIC DNA]</scope>
    <source>
        <strain>KSM-K16</strain>
    </source>
</reference>
<evidence type="ECO:0000255" key="1">
    <source>
        <dbReference type="HAMAP-Rule" id="MF_00259"/>
    </source>
</evidence>
<organism>
    <name type="scientific">Shouchella clausii (strain KSM-K16)</name>
    <name type="common">Alkalihalobacillus clausii</name>
    <dbReference type="NCBI Taxonomy" id="66692"/>
    <lineage>
        <taxon>Bacteria</taxon>
        <taxon>Bacillati</taxon>
        <taxon>Bacillota</taxon>
        <taxon>Bacilli</taxon>
        <taxon>Bacillales</taxon>
        <taxon>Bacillaceae</taxon>
        <taxon>Shouchella</taxon>
    </lineage>
</organism>
<proteinExistence type="inferred from homology"/>
<protein>
    <recommendedName>
        <fullName evidence="1">Aminomethyltransferase</fullName>
        <ecNumber evidence="1">2.1.2.10</ecNumber>
    </recommendedName>
    <alternativeName>
        <fullName evidence="1">Glycine cleavage system T protein</fullName>
    </alternativeName>
</protein>
<name>GCST_SHOC1</name>
<accession>Q5WF30</accession>
<gene>
    <name evidence="1" type="primary">gcvT</name>
    <name type="ordered locus">ABC2495</name>
</gene>
<dbReference type="EC" id="2.1.2.10" evidence="1"/>
<dbReference type="EMBL" id="AP006627">
    <property type="protein sequence ID" value="BAD65030.1"/>
    <property type="molecule type" value="Genomic_DNA"/>
</dbReference>
<dbReference type="RefSeq" id="WP_011247338.1">
    <property type="nucleotide sequence ID" value="NC_006582.1"/>
</dbReference>
<dbReference type="SMR" id="Q5WF30"/>
<dbReference type="STRING" id="66692.ABC2495"/>
<dbReference type="KEGG" id="bcl:ABC2495"/>
<dbReference type="eggNOG" id="COG0404">
    <property type="taxonomic scope" value="Bacteria"/>
</dbReference>
<dbReference type="HOGENOM" id="CLU_007884_10_2_9"/>
<dbReference type="OrthoDB" id="9774591at2"/>
<dbReference type="Proteomes" id="UP000001168">
    <property type="component" value="Chromosome"/>
</dbReference>
<dbReference type="GO" id="GO:0005829">
    <property type="term" value="C:cytosol"/>
    <property type="evidence" value="ECO:0007669"/>
    <property type="project" value="TreeGrafter"/>
</dbReference>
<dbReference type="GO" id="GO:0005960">
    <property type="term" value="C:glycine cleavage complex"/>
    <property type="evidence" value="ECO:0007669"/>
    <property type="project" value="InterPro"/>
</dbReference>
<dbReference type="GO" id="GO:0004047">
    <property type="term" value="F:aminomethyltransferase activity"/>
    <property type="evidence" value="ECO:0007669"/>
    <property type="project" value="UniProtKB-UniRule"/>
</dbReference>
<dbReference type="GO" id="GO:0008483">
    <property type="term" value="F:transaminase activity"/>
    <property type="evidence" value="ECO:0007669"/>
    <property type="project" value="UniProtKB-KW"/>
</dbReference>
<dbReference type="GO" id="GO:0019464">
    <property type="term" value="P:glycine decarboxylation via glycine cleavage system"/>
    <property type="evidence" value="ECO:0007669"/>
    <property type="project" value="UniProtKB-UniRule"/>
</dbReference>
<dbReference type="FunFam" id="2.40.30.110:FF:000003">
    <property type="entry name" value="Aminomethyltransferase"/>
    <property type="match status" value="1"/>
</dbReference>
<dbReference type="FunFam" id="3.30.70.1400:FF:000001">
    <property type="entry name" value="Aminomethyltransferase"/>
    <property type="match status" value="1"/>
</dbReference>
<dbReference type="FunFam" id="4.10.1250.10:FF:000001">
    <property type="entry name" value="Aminomethyltransferase"/>
    <property type="match status" value="1"/>
</dbReference>
<dbReference type="Gene3D" id="2.40.30.110">
    <property type="entry name" value="Aminomethyltransferase beta-barrel domains"/>
    <property type="match status" value="1"/>
</dbReference>
<dbReference type="Gene3D" id="3.30.70.1400">
    <property type="entry name" value="Aminomethyltransferase beta-barrel domains"/>
    <property type="match status" value="1"/>
</dbReference>
<dbReference type="Gene3D" id="4.10.1250.10">
    <property type="entry name" value="Aminomethyltransferase fragment"/>
    <property type="match status" value="1"/>
</dbReference>
<dbReference type="Gene3D" id="3.30.1360.120">
    <property type="entry name" value="Probable tRNA modification gtpase trme, domain 1"/>
    <property type="match status" value="1"/>
</dbReference>
<dbReference type="HAMAP" id="MF_00259">
    <property type="entry name" value="GcvT"/>
    <property type="match status" value="1"/>
</dbReference>
<dbReference type="InterPro" id="IPR006223">
    <property type="entry name" value="GCS_T"/>
</dbReference>
<dbReference type="InterPro" id="IPR022903">
    <property type="entry name" value="GCS_T_bac"/>
</dbReference>
<dbReference type="InterPro" id="IPR013977">
    <property type="entry name" value="GCST_C"/>
</dbReference>
<dbReference type="InterPro" id="IPR006222">
    <property type="entry name" value="GCV_T_N"/>
</dbReference>
<dbReference type="InterPro" id="IPR028896">
    <property type="entry name" value="GcvT/YgfZ/DmdA"/>
</dbReference>
<dbReference type="InterPro" id="IPR029043">
    <property type="entry name" value="GcvT/YgfZ_C"/>
</dbReference>
<dbReference type="InterPro" id="IPR027266">
    <property type="entry name" value="TrmE/GcvT_dom1"/>
</dbReference>
<dbReference type="NCBIfam" id="TIGR00528">
    <property type="entry name" value="gcvT"/>
    <property type="match status" value="1"/>
</dbReference>
<dbReference type="NCBIfam" id="NF001567">
    <property type="entry name" value="PRK00389.1"/>
    <property type="match status" value="1"/>
</dbReference>
<dbReference type="PANTHER" id="PTHR43757">
    <property type="entry name" value="AMINOMETHYLTRANSFERASE"/>
    <property type="match status" value="1"/>
</dbReference>
<dbReference type="PANTHER" id="PTHR43757:SF2">
    <property type="entry name" value="AMINOMETHYLTRANSFERASE, MITOCHONDRIAL"/>
    <property type="match status" value="1"/>
</dbReference>
<dbReference type="Pfam" id="PF01571">
    <property type="entry name" value="GCV_T"/>
    <property type="match status" value="1"/>
</dbReference>
<dbReference type="Pfam" id="PF08669">
    <property type="entry name" value="GCV_T_C"/>
    <property type="match status" value="1"/>
</dbReference>
<dbReference type="PIRSF" id="PIRSF006487">
    <property type="entry name" value="GcvT"/>
    <property type="match status" value="1"/>
</dbReference>
<dbReference type="SUPFAM" id="SSF101790">
    <property type="entry name" value="Aminomethyltransferase beta-barrel domain"/>
    <property type="match status" value="1"/>
</dbReference>
<dbReference type="SUPFAM" id="SSF103025">
    <property type="entry name" value="Folate-binding domain"/>
    <property type="match status" value="1"/>
</dbReference>
<comment type="function">
    <text evidence="1">The glycine cleavage system catalyzes the degradation of glycine.</text>
</comment>
<comment type="catalytic activity">
    <reaction evidence="1">
        <text>N(6)-[(R)-S(8)-aminomethyldihydrolipoyl]-L-lysyl-[protein] + (6S)-5,6,7,8-tetrahydrofolate = N(6)-[(R)-dihydrolipoyl]-L-lysyl-[protein] + (6R)-5,10-methylene-5,6,7,8-tetrahydrofolate + NH4(+)</text>
        <dbReference type="Rhea" id="RHEA:16945"/>
        <dbReference type="Rhea" id="RHEA-COMP:10475"/>
        <dbReference type="Rhea" id="RHEA-COMP:10492"/>
        <dbReference type="ChEBI" id="CHEBI:15636"/>
        <dbReference type="ChEBI" id="CHEBI:28938"/>
        <dbReference type="ChEBI" id="CHEBI:57453"/>
        <dbReference type="ChEBI" id="CHEBI:83100"/>
        <dbReference type="ChEBI" id="CHEBI:83143"/>
        <dbReference type="EC" id="2.1.2.10"/>
    </reaction>
</comment>
<comment type="subunit">
    <text evidence="1">The glycine cleavage system is composed of four proteins: P, T, L and H.</text>
</comment>
<comment type="similarity">
    <text evidence="1">Belongs to the GcvT family.</text>
</comment>
<sequence length="367" mass="40129">METKLLRTPLYELYDQAGAKTVDFGGWELPVSFSGIKKEHHAVRNAAGLFDVSHMGELLVEGPDALNNLQALVTNDLSKLQDNQAQYNAMCTESGGTVDDLIVYRRNENAYLLVLNAANIQSDIEWIRAHVSGQVTLTDISNETALLAVQGPKALAVLQTLTDEPLSEIRPFRFKENVMFAAIPVLASRTGYTGEDGFELYVKAGDAAELWRAILAAGEPFGLLPCGLGARDTLRFEARLPLYGQELTKDISPIEAGIGFAVKTDKQAAFIGQQALKKQKEQGPSRKLVGIEMVDRGIPRTGYRVFYQGQDVGFVTSGTQSPTLGKNVGLVLAKADAAAIDTELEVEVRGKRLRARVVKTPFYKRTK</sequence>
<keyword id="KW-0032">Aminotransferase</keyword>
<keyword id="KW-1185">Reference proteome</keyword>
<keyword id="KW-0808">Transferase</keyword>
<feature type="chain" id="PRO_0000122542" description="Aminomethyltransferase">
    <location>
        <begin position="1"/>
        <end position="367"/>
    </location>
</feature>